<keyword id="KW-0002">3D-structure</keyword>
<keyword id="KW-0131">Cell cycle</keyword>
<keyword id="KW-0195">Cyclin</keyword>
<keyword id="KW-0903">Direct protein sequencing</keyword>
<keyword id="KW-0539">Nucleus</keyword>
<keyword id="KW-0597">Phosphoprotein</keyword>
<keyword id="KW-1267">Proteomics identification</keyword>
<keyword id="KW-1185">Reference proteome</keyword>
<keyword id="KW-0804">Transcription</keyword>
<keyword id="KW-0805">Transcription regulation</keyword>
<comment type="function">
    <text evidence="2 5">Regulates CDK7, the catalytic subunit of the CDK-activating kinase (CAK) enzymatic complex. CAK activates the cyclin-associated kinases CDK1, CDK2, CDK4 and CDK6 by threonine phosphorylation. CAK complexed to the core-TFIIH basal transcription factor activates RNA polymerase II by serine phosphorylation of the repetitive C-terminal domain (CTD) of its large subunit (POLR2A), allowing its escape from the promoter and elongation of the transcripts. Involved in cell cycle control and in RNA transcription by RNA polymerase II. Its expression and activity are constant throughout the cell cycle.</text>
</comment>
<comment type="subunit">
    <text evidence="6">Associates primarily with CDK7 and MAT1 to form the CAK complex. CAK can further associate with the core-TFIIH to form the TFIIH basal transcription factor.</text>
</comment>
<comment type="interaction">
    <interactant intactId="EBI-741406">
        <id>P51946</id>
    </interactant>
    <interactant intactId="EBI-2548012">
        <id>Q9H2G9</id>
        <label>BLZF1</label>
    </interactant>
    <organismsDiffer>false</organismsDiffer>
    <experiments>3</experiments>
</comment>
<comment type="interaction">
    <interactant intactId="EBI-741406">
        <id>P51946</id>
    </interactant>
    <interactant intactId="EBI-739580">
        <id>Q13137</id>
        <label>CALCOCO2</label>
    </interactant>
    <organismsDiffer>false</organismsDiffer>
    <experiments>3</experiments>
</comment>
<comment type="interaction">
    <interactant intactId="EBI-741406">
        <id>P51946</id>
    </interactant>
    <interactant intactId="EBI-2808089">
        <id>Q8IYT3</id>
        <label>CCDC170</label>
    </interactant>
    <organismsDiffer>false</organismsDiffer>
    <experiments>3</experiments>
</comment>
<comment type="interaction">
    <interactant intactId="EBI-741406">
        <id>P51946</id>
    </interactant>
    <interactant intactId="EBI-356876">
        <id>P50991</id>
        <label>CCT4</label>
    </interactant>
    <organismsDiffer>false</organismsDiffer>
    <experiments>3</experiments>
</comment>
<comment type="interaction">
    <interactant intactId="EBI-741406">
        <id>P51946</id>
    </interactant>
    <interactant intactId="EBI-375096">
        <id>P24941</id>
        <label>CDK2</label>
    </interactant>
    <organismsDiffer>false</organismsDiffer>
    <experiments>6</experiments>
</comment>
<comment type="interaction">
    <interactant intactId="EBI-741406">
        <id>P51946</id>
    </interactant>
    <interactant intactId="EBI-1245761">
        <id>Q00526</id>
        <label>CDK3</label>
    </interactant>
    <organismsDiffer>false</organismsDiffer>
    <experiments>3</experiments>
</comment>
<comment type="interaction">
    <interactant intactId="EBI-741406">
        <id>P51946</id>
    </interactant>
    <interactant intactId="EBI-295663">
        <id>Q00534</id>
        <label>CDK6</label>
    </interactant>
    <organismsDiffer>false</organismsDiffer>
    <experiments>5</experiments>
</comment>
<comment type="interaction">
    <interactant intactId="EBI-741406">
        <id>P51946</id>
    </interactant>
    <interactant intactId="EBI-741533">
        <id>P56545</id>
        <label>CTBP2</label>
    </interactant>
    <organismsDiffer>false</organismsDiffer>
    <experiments>5</experiments>
</comment>
<comment type="interaction">
    <interactant intactId="EBI-741406">
        <id>P51946</id>
    </interactant>
    <interactant intactId="EBI-742054">
        <id>Q96D03</id>
        <label>DDIT4L</label>
    </interactant>
    <organismsDiffer>false</organismsDiffer>
    <experiments>3</experiments>
</comment>
<comment type="interaction">
    <interactant intactId="EBI-741406">
        <id>P51946</id>
    </interactant>
    <interactant intactId="EBI-715161">
        <id>Q9UNI6</id>
        <label>DUSP12</label>
    </interactant>
    <organismsDiffer>false</organismsDiffer>
    <experiments>7</experiments>
</comment>
<comment type="interaction">
    <interactant intactId="EBI-741406">
        <id>P51946</id>
    </interactant>
    <interactant intactId="EBI-618309">
        <id>Q08379</id>
        <label>GOLGA2</label>
    </interactant>
    <organismsDiffer>false</organismsDiffer>
    <experiments>9</experiments>
</comment>
<comment type="interaction">
    <interactant intactId="EBI-741406">
        <id>P51946</id>
    </interactant>
    <interactant intactId="EBI-717919">
        <id>Q4V328</id>
        <label>GRIPAP1</label>
    </interactant>
    <organismsDiffer>false</organismsDiffer>
    <experiments>3</experiments>
</comment>
<comment type="interaction">
    <interactant intactId="EBI-741406">
        <id>P51946</id>
    </interactant>
    <interactant intactId="EBI-1643885">
        <id>Q6P597</id>
        <label>KLC3</label>
    </interactant>
    <organismsDiffer>false</organismsDiffer>
    <experiments>4</experiments>
</comment>
<comment type="interaction">
    <interactant intactId="EBI-741406">
        <id>P51946</id>
    </interactant>
    <interactant intactId="EBI-348259">
        <id>Q96EZ8</id>
        <label>MCRS1</label>
    </interactant>
    <organismsDiffer>false</organismsDiffer>
    <experiments>3</experiments>
</comment>
<comment type="interaction">
    <interactant intactId="EBI-741406">
        <id>P51946</id>
    </interactant>
    <interactant intactId="EBI-10293003">
        <id>Q9Y216</id>
        <label>MTMR7</label>
    </interactant>
    <organismsDiffer>false</organismsDiffer>
    <experiments>6</experiments>
</comment>
<comment type="interaction">
    <interactant intactId="EBI-741406">
        <id>P51946</id>
    </interactant>
    <interactant intactId="EBI-715849">
        <id>O14777</id>
        <label>NDC80</label>
    </interactant>
    <organismsDiffer>false</organismsDiffer>
    <experiments>3</experiments>
</comment>
<comment type="interaction">
    <interactant intactId="EBI-741406">
        <id>P51946</id>
    </interactant>
    <interactant intactId="EBI-79165">
        <id>Q9NRD5</id>
        <label>PICK1</label>
    </interactant>
    <organismsDiffer>false</organismsDiffer>
    <experiments>3</experiments>
</comment>
<comment type="interaction">
    <interactant intactId="EBI-741406">
        <id>P51946</id>
    </interactant>
    <interactant intactId="EBI-745426">
        <id>Q13136</id>
        <label>PPFIA1</label>
    </interactant>
    <organismsDiffer>false</organismsDiffer>
    <experiments>6</experiments>
</comment>
<comment type="interaction">
    <interactant intactId="EBI-741406">
        <id>P51946</id>
    </interactant>
    <interactant intactId="EBI-359352">
        <id>P25786</id>
        <label>PSMA1</label>
    </interactant>
    <organismsDiffer>false</organismsDiffer>
    <experiments>9</experiments>
</comment>
<comment type="interaction">
    <interactant intactId="EBI-741406">
        <id>P51946</id>
    </interactant>
    <interactant intactId="EBI-413374">
        <id>P10276</id>
        <label>RARA</label>
    </interactant>
    <organismsDiffer>false</organismsDiffer>
    <experiments>2</experiments>
</comment>
<comment type="interaction">
    <interactant intactId="EBI-741406">
        <id>P51946</id>
    </interactant>
    <interactant intactId="EBI-1244971">
        <id>Q15669</id>
        <label>RHOH</label>
    </interactant>
    <organismsDiffer>false</organismsDiffer>
    <experiments>3</experiments>
</comment>
<comment type="interaction">
    <interactant intactId="EBI-741406">
        <id>P51946</id>
    </interactant>
    <interactant intactId="EBI-476295">
        <id>P31947</id>
        <label>SFN</label>
    </interactant>
    <organismsDiffer>false</organismsDiffer>
    <experiments>4</experiments>
</comment>
<comment type="interaction">
    <interactant intactId="EBI-741406">
        <id>P51946</id>
    </interactant>
    <interactant intactId="EBI-296723">
        <id>O95295</id>
        <label>SNAPIN</label>
    </interactant>
    <organismsDiffer>false</organismsDiffer>
    <experiments>3</experiments>
</comment>
<comment type="interaction">
    <interactant intactId="EBI-741406">
        <id>P51946</id>
    </interactant>
    <interactant intactId="EBI-741237">
        <id>O60504</id>
        <label>SORBS3</label>
    </interactant>
    <organismsDiffer>false</organismsDiffer>
    <experiments>3</experiments>
</comment>
<comment type="interaction">
    <interactant intactId="EBI-741406">
        <id>P51946</id>
    </interactant>
    <interactant intactId="EBI-2212028">
        <id>Q9Y2D8</id>
        <label>SSX2IP</label>
    </interactant>
    <organismsDiffer>false</organismsDiffer>
    <experiments>4</experiments>
</comment>
<comment type="interaction">
    <interactant intactId="EBI-741406">
        <id>P51946</id>
    </interactant>
    <interactant intactId="EBI-11952764">
        <id>Q99081-3</id>
        <label>TCF12</label>
    </interactant>
    <organismsDiffer>false</organismsDiffer>
    <experiments>3</experiments>
</comment>
<comment type="interaction">
    <interactant intactId="EBI-741406">
        <id>P51946</id>
    </interactant>
    <interactant intactId="EBI-13636688">
        <id>P15884-3</id>
        <label>TCF4</label>
    </interactant>
    <organismsDiffer>false</organismsDiffer>
    <experiments>3</experiments>
</comment>
<comment type="interaction">
    <interactant intactId="EBI-741406">
        <id>P51946</id>
    </interactant>
    <interactant intactId="EBI-11059915">
        <id>Q8N7C3</id>
        <label>TRIML2</label>
    </interactant>
    <organismsDiffer>false</organismsDiffer>
    <experiments>3</experiments>
</comment>
<comment type="interaction">
    <interactant intactId="EBI-741406">
        <id>P51946</id>
    </interactant>
    <interactant intactId="EBI-625509">
        <id>Q8N720</id>
        <label>ZNF655</label>
    </interactant>
    <organismsDiffer>false</organismsDiffer>
    <experiments>3</experiments>
</comment>
<comment type="interaction">
    <interactant intactId="EBI-741406">
        <id>P51946</id>
    </interactant>
    <interactant intactId="EBI-741415">
        <id>O60232</id>
        <label>ZNRD2</label>
    </interactant>
    <organismsDiffer>false</organismsDiffer>
    <experiments>4</experiments>
</comment>
<comment type="subcellular location">
    <subcellularLocation>
        <location>Nucleus</location>
    </subcellularLocation>
</comment>
<comment type="similarity">
    <text evidence="9">Belongs to the cyclin family. Cyclin C subfamily.</text>
</comment>
<evidence type="ECO:0000256" key="1">
    <source>
        <dbReference type="SAM" id="MobiDB-lite"/>
    </source>
</evidence>
<evidence type="ECO:0000269" key="2">
    <source>
    </source>
</evidence>
<evidence type="ECO:0000269" key="3">
    <source>
    </source>
</evidence>
<evidence type="ECO:0000269" key="4">
    <source>
    </source>
</evidence>
<evidence type="ECO:0000269" key="5">
    <source>
    </source>
</evidence>
<evidence type="ECO:0000269" key="6">
    <source>
    </source>
</evidence>
<evidence type="ECO:0000269" key="7">
    <source ref="3"/>
</evidence>
<evidence type="ECO:0000269" key="8">
    <source ref="4"/>
</evidence>
<evidence type="ECO:0000305" key="9"/>
<evidence type="ECO:0007744" key="10">
    <source>
    </source>
</evidence>
<evidence type="ECO:0007744" key="11">
    <source>
    </source>
</evidence>
<evidence type="ECO:0007744" key="12">
    <source>
    </source>
</evidence>
<evidence type="ECO:0007744" key="13">
    <source>
    </source>
</evidence>
<evidence type="ECO:0007744" key="14">
    <source>
    </source>
</evidence>
<evidence type="ECO:0007744" key="15">
    <source>
    </source>
</evidence>
<evidence type="ECO:0007744" key="16">
    <source>
    </source>
</evidence>
<evidence type="ECO:0007829" key="17">
    <source>
        <dbReference type="PDB" id="1JKW"/>
    </source>
</evidence>
<evidence type="ECO:0007829" key="18">
    <source>
        <dbReference type="PDB" id="1KXU"/>
    </source>
</evidence>
<evidence type="ECO:0007829" key="19">
    <source>
        <dbReference type="PDB" id="8P77"/>
    </source>
</evidence>
<evidence type="ECO:0007829" key="20">
    <source>
        <dbReference type="PDB" id="8P79"/>
    </source>
</evidence>
<feature type="chain" id="PRO_0000080471" description="Cyclin-H">
    <location>
        <begin position="1"/>
        <end position="323"/>
    </location>
</feature>
<feature type="region of interest" description="Disordered" evidence="1">
    <location>
        <begin position="297"/>
        <end position="323"/>
    </location>
</feature>
<feature type="compositionally biased region" description="Basic and acidic residues" evidence="1">
    <location>
        <begin position="302"/>
        <end position="311"/>
    </location>
</feature>
<feature type="compositionally biased region" description="Acidic residues" evidence="1">
    <location>
        <begin position="312"/>
        <end position="323"/>
    </location>
</feature>
<feature type="modified residue" description="Phosphoserine; by CDK8" evidence="3">
    <location>
        <position position="5"/>
    </location>
</feature>
<feature type="modified residue" description="Phosphoserine" evidence="11 16">
    <location>
        <position position="132"/>
    </location>
</feature>
<feature type="modified residue" description="Phosphoserine; by CDK8" evidence="3">
    <location>
        <position position="304"/>
    </location>
</feature>
<feature type="modified residue" description="Phosphothreonine" evidence="10 11 12 13 14 15 16">
    <location>
        <position position="315"/>
    </location>
</feature>
<feature type="modified residue" description="Phosphoserine" evidence="11 14">
    <location>
        <position position="322"/>
    </location>
</feature>
<feature type="sequence variant" id="VAR_013067" description="In dbSNP:rs2234942." evidence="8">
    <original>R</original>
    <variation>L</variation>
    <location>
        <position position="28"/>
    </location>
</feature>
<feature type="sequence variant" id="VAR_013068" description="In dbSNP:rs3093785." evidence="8">
    <original>M</original>
    <variation>V</variation>
    <location>
        <position position="54"/>
    </location>
</feature>
<feature type="sequence variant" id="VAR_013069" description="In dbSNP:rs2266691." evidence="8">
    <original>K</original>
    <variation>R</variation>
    <location>
        <position position="138"/>
    </location>
</feature>
<feature type="sequence variant" id="VAR_013070" description="In dbSNP:rs2230641." evidence="4 7 8">
    <original>V</original>
    <variation>A</variation>
    <location>
        <position position="270"/>
    </location>
</feature>
<feature type="mutagenesis site" description="No effect on the transcriptional activity of the reconstituted TFIIH complex." evidence="3">
    <original>S</original>
    <variation>A</variation>
    <location>
        <position position="5"/>
    </location>
</feature>
<feature type="mutagenesis site" description="No effect on the transcriptional activity of the reconstituted TFIIH complex." evidence="3">
    <original>S</original>
    <variation>A</variation>
    <location>
        <position position="304"/>
    </location>
</feature>
<feature type="helix" evidence="20">
    <location>
        <begin position="2"/>
        <end position="4"/>
    </location>
</feature>
<feature type="helix" evidence="20">
    <location>
        <begin position="6"/>
        <end position="10"/>
    </location>
</feature>
<feature type="helix" evidence="20">
    <location>
        <begin position="16"/>
        <end position="37"/>
    </location>
</feature>
<feature type="strand" evidence="17">
    <location>
        <begin position="38"/>
        <end position="40"/>
    </location>
</feature>
<feature type="helix" evidence="20">
    <location>
        <begin position="50"/>
        <end position="70"/>
    </location>
</feature>
<feature type="turn" evidence="20">
    <location>
        <begin position="72"/>
        <end position="74"/>
    </location>
</feature>
<feature type="helix" evidence="20">
    <location>
        <begin position="77"/>
        <end position="90"/>
    </location>
</feature>
<feature type="helix" evidence="17">
    <location>
        <begin position="91"/>
        <end position="93"/>
    </location>
</feature>
<feature type="turn" evidence="20">
    <location>
        <begin position="96"/>
        <end position="98"/>
    </location>
</feature>
<feature type="helix" evidence="20">
    <location>
        <begin position="101"/>
        <end position="115"/>
    </location>
</feature>
<feature type="helix" evidence="20">
    <location>
        <begin position="122"/>
        <end position="126"/>
    </location>
</feature>
<feature type="strand" evidence="20">
    <location>
        <begin position="129"/>
        <end position="131"/>
    </location>
</feature>
<feature type="helix" evidence="20">
    <location>
        <begin position="133"/>
        <end position="153"/>
    </location>
</feature>
<feature type="turn" evidence="20">
    <location>
        <begin position="154"/>
        <end position="156"/>
    </location>
</feature>
<feature type="helix" evidence="20">
    <location>
        <begin position="164"/>
        <end position="177"/>
    </location>
</feature>
<feature type="helix" evidence="18">
    <location>
        <begin position="179"/>
        <end position="182"/>
    </location>
</feature>
<feature type="helix" evidence="20">
    <location>
        <begin position="184"/>
        <end position="187"/>
    </location>
</feature>
<feature type="helix" evidence="20">
    <location>
        <begin position="188"/>
        <end position="200"/>
    </location>
</feature>
<feature type="helix" evidence="20">
    <location>
        <begin position="203"/>
        <end position="206"/>
    </location>
</feature>
<feature type="helix" evidence="20">
    <location>
        <begin position="209"/>
        <end position="224"/>
    </location>
</feature>
<feature type="helix" evidence="20">
    <location>
        <begin position="229"/>
        <end position="233"/>
    </location>
</feature>
<feature type="turn" evidence="19">
    <location>
        <begin position="234"/>
        <end position="236"/>
    </location>
</feature>
<feature type="turn" evidence="20">
    <location>
        <begin position="238"/>
        <end position="240"/>
    </location>
</feature>
<feature type="helix" evidence="20">
    <location>
        <begin position="242"/>
        <end position="260"/>
    </location>
</feature>
<feature type="helix" evidence="20">
    <location>
        <begin position="267"/>
        <end position="283"/>
    </location>
</feature>
<accession>P51946</accession>
<accession>Q53X72</accession>
<accession>Q8TBL9</accession>
<reference key="1">
    <citation type="journal article" date="1994" name="Nature">
        <title>A cyclin associated with the CDK-activating kinase MO15.</title>
        <authorList>
            <person name="Maekelae T.P."/>
            <person name="Tassan J.-P."/>
            <person name="Nigg E.A."/>
            <person name="Frutiger S."/>
            <person name="Hughes G.J."/>
            <person name="Weinberg R.A."/>
        </authorList>
    </citation>
    <scope>NUCLEOTIDE SEQUENCE [MRNA]</scope>
    <scope>PROTEIN SEQUENCE OF 2-20; 106-133 AND 256-279</scope>
    <source>
        <tissue>Liver</tissue>
    </source>
</reference>
<reference key="2">
    <citation type="journal article" date="1994" name="Cell">
        <title>A novel cyclin associates with MO15/CDK7 to form the CDK-activating kinase.</title>
        <authorList>
            <person name="Fisher R.P."/>
            <person name="Morgan D.O."/>
        </authorList>
    </citation>
    <scope>NUCLEOTIDE SEQUENCE [MRNA]</scope>
    <scope>PROTEIN SEQUENCE OF 10-21; 90-102 AND 190-197</scope>
</reference>
<reference key="3">
    <citation type="submission" date="2004-05" db="EMBL/GenBank/DDBJ databases">
        <title>Cloning of human full open reading frames in Gateway(TM) system entry vector (pDONR201).</title>
        <authorList>
            <person name="Ebert L."/>
            <person name="Schick M."/>
            <person name="Neubert P."/>
            <person name="Schatten R."/>
            <person name="Henze S."/>
            <person name="Korn B."/>
        </authorList>
    </citation>
    <scope>NUCLEOTIDE SEQUENCE [LARGE SCALE MRNA]</scope>
    <scope>VARIANT ALA-270</scope>
</reference>
<reference key="4">
    <citation type="submission" date="2002-01" db="EMBL/GenBank/DDBJ databases">
        <authorList>
            <consortium name="NIEHS SNPs program"/>
        </authorList>
    </citation>
    <scope>NUCLEOTIDE SEQUENCE [GENOMIC DNA]</scope>
    <scope>VARIANTS LEU-28; VAL-54; ARG-138 AND ALA-270</scope>
</reference>
<reference key="5">
    <citation type="journal article" date="2004" name="Genome Res.">
        <title>The status, quality, and expansion of the NIH full-length cDNA project: the Mammalian Gene Collection (MGC).</title>
        <authorList>
            <consortium name="The MGC Project Team"/>
        </authorList>
    </citation>
    <scope>NUCLEOTIDE SEQUENCE [LARGE SCALE MRNA]</scope>
    <scope>VARIANT ALA-270</scope>
    <source>
        <tissue>Bone marrow</tissue>
        <tissue>Brain</tissue>
        <tissue>Embryonic brain</tissue>
        <tissue>Urinary bladder</tissue>
    </source>
</reference>
<reference key="6">
    <citation type="journal article" date="1995" name="Nature">
        <title>Cdk-activating kinase complex is a component of human transcription factor TFIIH.</title>
        <authorList>
            <person name="Shiekhattar R."/>
            <person name="Mermelstein F."/>
            <person name="Fisher R.P."/>
            <person name="Drapkin R."/>
            <person name="Dynlacht B."/>
            <person name="Wessling H.C."/>
            <person name="Morgan D.O."/>
            <person name="Reinberg D."/>
        </authorList>
    </citation>
    <scope>FUNCTION</scope>
</reference>
<reference key="7">
    <citation type="journal article" date="1998" name="J. Biol. Chem.">
        <title>Immunoaffinity purification and functional characterization of human transcription factor IIH and RNA polymerase II from clonal cell lines that conditionally express epitope-tagged subunits of the multiprotein complexes.</title>
        <authorList>
            <person name="Kershnar E."/>
            <person name="Wu S.-Y."/>
            <person name="Chiang C.-M."/>
        </authorList>
    </citation>
    <scope>IDENTIFICATION IN THE TFIIH BASAL TRANSCRIPTION FACTOR</scope>
</reference>
<reference key="8">
    <citation type="journal article" date="1999" name="Mol. Cell">
        <title>Reconstitution of the transcription factor TFIIH: assignment of functions for the three enzymatic subunits, XPB, XPD, and cdk7.</title>
        <authorList>
            <person name="Tirode F."/>
            <person name="Busso D."/>
            <person name="Coin F."/>
            <person name="Egly J.-M."/>
        </authorList>
    </citation>
    <scope>FUNCTION</scope>
</reference>
<reference key="9">
    <citation type="journal article" date="2000" name="Nature">
        <title>TFIIH is negatively regulated by cdk8-containing mediator complexes.</title>
        <authorList>
            <person name="Akoulitchev S."/>
            <person name="Chuikov S."/>
            <person name="Reinberg D."/>
        </authorList>
    </citation>
    <scope>PHOSPHORYLATION AT SER-5 AND SER-304</scope>
    <scope>MUTAGENESIS OF SER-5 AND SER-304</scope>
</reference>
<reference key="10">
    <citation type="journal article" date="2006" name="Cell">
        <title>Global, in vivo, and site-specific phosphorylation dynamics in signaling networks.</title>
        <authorList>
            <person name="Olsen J.V."/>
            <person name="Blagoev B."/>
            <person name="Gnad F."/>
            <person name="Macek B."/>
            <person name="Kumar C."/>
            <person name="Mortensen P."/>
            <person name="Mann M."/>
        </authorList>
    </citation>
    <scope>PHOSPHORYLATION [LARGE SCALE ANALYSIS] AT THR-315</scope>
    <scope>IDENTIFICATION BY MASS SPECTROMETRY [LARGE SCALE ANALYSIS]</scope>
    <source>
        <tissue>Cervix carcinoma</tissue>
    </source>
</reference>
<reference key="11">
    <citation type="journal article" date="2008" name="Mol. Cell">
        <title>Kinase-selective enrichment enables quantitative phosphoproteomics of the kinome across the cell cycle.</title>
        <authorList>
            <person name="Daub H."/>
            <person name="Olsen J.V."/>
            <person name="Bairlein M."/>
            <person name="Gnad F."/>
            <person name="Oppermann F.S."/>
            <person name="Korner R."/>
            <person name="Greff Z."/>
            <person name="Keri G."/>
            <person name="Stemmann O."/>
            <person name="Mann M."/>
        </authorList>
    </citation>
    <scope>PHOSPHORYLATION [LARGE SCALE ANALYSIS] AT SER-132; THR-315 AND SER-322</scope>
    <scope>IDENTIFICATION BY MASS SPECTROMETRY [LARGE SCALE ANALYSIS]</scope>
    <source>
        <tissue>Cervix carcinoma</tissue>
    </source>
</reference>
<reference key="12">
    <citation type="journal article" date="2008" name="Proc. Natl. Acad. Sci. U.S.A.">
        <title>A quantitative atlas of mitotic phosphorylation.</title>
        <authorList>
            <person name="Dephoure N."/>
            <person name="Zhou C."/>
            <person name="Villen J."/>
            <person name="Beausoleil S.A."/>
            <person name="Bakalarski C.E."/>
            <person name="Elledge S.J."/>
            <person name="Gygi S.P."/>
        </authorList>
    </citation>
    <scope>IDENTIFICATION BY MASS SPECTROMETRY [LARGE SCALE ANALYSIS]</scope>
    <source>
        <tissue>Cervix carcinoma</tissue>
    </source>
</reference>
<reference key="13">
    <citation type="journal article" date="2009" name="Mol. Cell. Proteomics">
        <title>Large-scale proteomics analysis of the human kinome.</title>
        <authorList>
            <person name="Oppermann F.S."/>
            <person name="Gnad F."/>
            <person name="Olsen J.V."/>
            <person name="Hornberger R."/>
            <person name="Greff Z."/>
            <person name="Keri G."/>
            <person name="Mann M."/>
            <person name="Daub H."/>
        </authorList>
    </citation>
    <scope>PHOSPHORYLATION [LARGE SCALE ANALYSIS] AT THR-315</scope>
    <scope>IDENTIFICATION BY MASS SPECTROMETRY [LARGE SCALE ANALYSIS]</scope>
</reference>
<reference key="14">
    <citation type="journal article" date="2009" name="Sci. Signal.">
        <title>Quantitative phosphoproteomic analysis of T cell receptor signaling reveals system-wide modulation of protein-protein interactions.</title>
        <authorList>
            <person name="Mayya V."/>
            <person name="Lundgren D.H."/>
            <person name="Hwang S.-I."/>
            <person name="Rezaul K."/>
            <person name="Wu L."/>
            <person name="Eng J.K."/>
            <person name="Rodionov V."/>
            <person name="Han D.K."/>
        </authorList>
    </citation>
    <scope>PHOSPHORYLATION [LARGE SCALE ANALYSIS] AT THR-315</scope>
    <scope>IDENTIFICATION BY MASS SPECTROMETRY [LARGE SCALE ANALYSIS]</scope>
    <source>
        <tissue>Leukemic T-cell</tissue>
    </source>
</reference>
<reference key="15">
    <citation type="journal article" date="2010" name="Sci. Signal.">
        <title>Quantitative phosphoproteomics reveals widespread full phosphorylation site occupancy during mitosis.</title>
        <authorList>
            <person name="Olsen J.V."/>
            <person name="Vermeulen M."/>
            <person name="Santamaria A."/>
            <person name="Kumar C."/>
            <person name="Miller M.L."/>
            <person name="Jensen L.J."/>
            <person name="Gnad F."/>
            <person name="Cox J."/>
            <person name="Jensen T.S."/>
            <person name="Nigg E.A."/>
            <person name="Brunak S."/>
            <person name="Mann M."/>
        </authorList>
    </citation>
    <scope>PHOSPHORYLATION [LARGE SCALE ANALYSIS] AT THR-315 AND SER-322</scope>
    <scope>IDENTIFICATION BY MASS SPECTROMETRY [LARGE SCALE ANALYSIS]</scope>
    <source>
        <tissue>Cervix carcinoma</tissue>
    </source>
</reference>
<reference key="16">
    <citation type="journal article" date="2011" name="BMC Syst. Biol.">
        <title>Initial characterization of the human central proteome.</title>
        <authorList>
            <person name="Burkard T.R."/>
            <person name="Planyavsky M."/>
            <person name="Kaupe I."/>
            <person name="Breitwieser F.P."/>
            <person name="Buerckstuemmer T."/>
            <person name="Bennett K.L."/>
            <person name="Superti-Furga G."/>
            <person name="Colinge J."/>
        </authorList>
    </citation>
    <scope>IDENTIFICATION BY MASS SPECTROMETRY [LARGE SCALE ANALYSIS]</scope>
</reference>
<reference key="17">
    <citation type="journal article" date="2011" name="Sci. Signal.">
        <title>System-wide temporal characterization of the proteome and phosphoproteome of human embryonic stem cell differentiation.</title>
        <authorList>
            <person name="Rigbolt K.T."/>
            <person name="Prokhorova T.A."/>
            <person name="Akimov V."/>
            <person name="Henningsen J."/>
            <person name="Johansen P.T."/>
            <person name="Kratchmarova I."/>
            <person name="Kassem M."/>
            <person name="Mann M."/>
            <person name="Olsen J.V."/>
            <person name="Blagoev B."/>
        </authorList>
    </citation>
    <scope>PHOSPHORYLATION [LARGE SCALE ANALYSIS] AT THR-315</scope>
    <scope>IDENTIFICATION BY MASS SPECTROMETRY [LARGE SCALE ANALYSIS]</scope>
</reference>
<reference key="18">
    <citation type="journal article" date="2013" name="J. Proteome Res.">
        <title>Toward a comprehensive characterization of a human cancer cell phosphoproteome.</title>
        <authorList>
            <person name="Zhou H."/>
            <person name="Di Palma S."/>
            <person name="Preisinger C."/>
            <person name="Peng M."/>
            <person name="Polat A.N."/>
            <person name="Heck A.J."/>
            <person name="Mohammed S."/>
        </authorList>
    </citation>
    <scope>PHOSPHORYLATION [LARGE SCALE ANALYSIS] AT SER-132 AND THR-315</scope>
    <scope>IDENTIFICATION BY MASS SPECTROMETRY [LARGE SCALE ANALYSIS]</scope>
    <source>
        <tissue>Cervix carcinoma</tissue>
        <tissue>Erythroleukemia</tissue>
    </source>
</reference>
<reference key="19">
    <citation type="journal article" date="1996" name="Nat. Struct. Biol.">
        <title>Three-dimensional structure of human cyclin H, a positive regulator of the CDK-activating kinase.</title>
        <authorList>
            <person name="Kim K.K."/>
            <person name="Chamberlin H.M."/>
            <person name="Morgan D.O."/>
            <person name="Kim S.-H."/>
        </authorList>
    </citation>
    <scope>X-RAY CRYSTALLOGRAPHY (2.6 ANGSTROMS)</scope>
</reference>
<reference key="20">
    <citation type="journal article" date="1997" name="EMBO J.">
        <title>The structure of cyclin H: common mode of kinase activation and specific features.</title>
        <authorList>
            <person name="Andersen G."/>
            <person name="Busso D."/>
            <person name="Poterszman A."/>
            <person name="Hwang J.R."/>
            <person name="Wurtz J.-M."/>
            <person name="Ripp R."/>
            <person name="Thierry J.-C."/>
            <person name="Egly J.-M."/>
            <person name="Moras D."/>
        </authorList>
    </citation>
    <scope>X-RAY CRYSTALLOGRAPHY (2.6 ANGSTROMS) OF 11-287</scope>
</reference>
<organism>
    <name type="scientific">Homo sapiens</name>
    <name type="common">Human</name>
    <dbReference type="NCBI Taxonomy" id="9606"/>
    <lineage>
        <taxon>Eukaryota</taxon>
        <taxon>Metazoa</taxon>
        <taxon>Chordata</taxon>
        <taxon>Craniata</taxon>
        <taxon>Vertebrata</taxon>
        <taxon>Euteleostomi</taxon>
        <taxon>Mammalia</taxon>
        <taxon>Eutheria</taxon>
        <taxon>Euarchontoglires</taxon>
        <taxon>Primates</taxon>
        <taxon>Haplorrhini</taxon>
        <taxon>Catarrhini</taxon>
        <taxon>Hominidae</taxon>
        <taxon>Homo</taxon>
    </lineage>
</organism>
<dbReference type="EMBL" id="U11791">
    <property type="protein sequence ID" value="AAA21361.1"/>
    <property type="molecule type" value="mRNA"/>
</dbReference>
<dbReference type="EMBL" id="U12685">
    <property type="protein sequence ID" value="AAA57006.1"/>
    <property type="molecule type" value="mRNA"/>
</dbReference>
<dbReference type="EMBL" id="CR407658">
    <property type="protein sequence ID" value="CAG28586.1"/>
    <property type="molecule type" value="mRNA"/>
</dbReference>
<dbReference type="EMBL" id="AF477979">
    <property type="protein sequence ID" value="AAL74271.1"/>
    <property type="molecule type" value="Genomic_DNA"/>
</dbReference>
<dbReference type="EMBL" id="BC005280">
    <property type="protein sequence ID" value="AAH05280.1"/>
    <property type="molecule type" value="mRNA"/>
</dbReference>
<dbReference type="EMBL" id="BC016705">
    <property type="protein sequence ID" value="AAH16705.1"/>
    <property type="molecule type" value="mRNA"/>
</dbReference>
<dbReference type="EMBL" id="BC016823">
    <property type="protein sequence ID" value="AAH16823.1"/>
    <property type="molecule type" value="mRNA"/>
</dbReference>
<dbReference type="EMBL" id="BC022351">
    <property type="protein sequence ID" value="AAH22351.1"/>
    <property type="molecule type" value="mRNA"/>
</dbReference>
<dbReference type="CCDS" id="CCDS4064.1"/>
<dbReference type="PIR" id="I38731">
    <property type="entry name" value="I38731"/>
</dbReference>
<dbReference type="RefSeq" id="NP_001230.1">
    <property type="nucleotide sequence ID" value="NM_001239.4"/>
</dbReference>
<dbReference type="PDB" id="1JKW">
    <property type="method" value="X-ray"/>
    <property type="resolution" value="2.60 A"/>
    <property type="chains" value="A=1-323"/>
</dbReference>
<dbReference type="PDB" id="1KXU">
    <property type="method" value="X-ray"/>
    <property type="resolution" value="2.60 A"/>
    <property type="chains" value="A=1-323"/>
</dbReference>
<dbReference type="PDB" id="6O9L">
    <property type="method" value="EM"/>
    <property type="resolution" value="7.20 A"/>
    <property type="chains" value="9=1-323"/>
</dbReference>
<dbReference type="PDB" id="6XBZ">
    <property type="method" value="EM"/>
    <property type="resolution" value="2.80 A"/>
    <property type="chains" value="I=1-323"/>
</dbReference>
<dbReference type="PDB" id="6XD3">
    <property type="method" value="EM"/>
    <property type="resolution" value="3.30 A"/>
    <property type="chains" value="I=1-323"/>
</dbReference>
<dbReference type="PDB" id="7B5O">
    <property type="method" value="EM"/>
    <property type="resolution" value="2.50 A"/>
    <property type="chains" value="I=1-323"/>
</dbReference>
<dbReference type="PDB" id="7B5Q">
    <property type="method" value="EM"/>
    <property type="resolution" value="2.50 A"/>
    <property type="chains" value="I=1-323"/>
</dbReference>
<dbReference type="PDB" id="7EGB">
    <property type="method" value="EM"/>
    <property type="resolution" value="3.30 A"/>
    <property type="chains" value="9=1-323"/>
</dbReference>
<dbReference type="PDB" id="7EGC">
    <property type="method" value="EM"/>
    <property type="resolution" value="3.90 A"/>
    <property type="chains" value="9=1-323"/>
</dbReference>
<dbReference type="PDB" id="7ENA">
    <property type="method" value="EM"/>
    <property type="resolution" value="4.07 A"/>
    <property type="chains" value="9=1-323"/>
</dbReference>
<dbReference type="PDB" id="7ENC">
    <property type="method" value="EM"/>
    <property type="resolution" value="4.13 A"/>
    <property type="chains" value="9=1-323"/>
</dbReference>
<dbReference type="PDB" id="7LBM">
    <property type="method" value="EM"/>
    <property type="resolution" value="4.80 A"/>
    <property type="chains" value="f=1-323"/>
</dbReference>
<dbReference type="PDB" id="7NVR">
    <property type="method" value="EM"/>
    <property type="resolution" value="4.50 A"/>
    <property type="chains" value="9=1-323"/>
</dbReference>
<dbReference type="PDB" id="8BVW">
    <property type="method" value="EM"/>
    <property type="resolution" value="4.00 A"/>
    <property type="chains" value="9=1-323"/>
</dbReference>
<dbReference type="PDB" id="8BYQ">
    <property type="method" value="EM"/>
    <property type="resolution" value="4.10 A"/>
    <property type="chains" value="9=1-323"/>
</dbReference>
<dbReference type="PDB" id="8GXQ">
    <property type="method" value="EM"/>
    <property type="resolution" value="5.04 A"/>
    <property type="chains" value="HJ=1-323"/>
</dbReference>
<dbReference type="PDB" id="8GXS">
    <property type="method" value="EM"/>
    <property type="resolution" value="4.16 A"/>
    <property type="chains" value="HJ=1-323"/>
</dbReference>
<dbReference type="PDB" id="8ORM">
    <property type="method" value="EM"/>
    <property type="resolution" value="1.90 A"/>
    <property type="chains" value="I=1-323"/>
</dbReference>
<dbReference type="PDB" id="8P6V">
    <property type="method" value="EM"/>
    <property type="resolution" value="1.90 A"/>
    <property type="chains" value="I=1-323"/>
</dbReference>
<dbReference type="PDB" id="8P6W">
    <property type="method" value="EM"/>
    <property type="resolution" value="1.90 A"/>
    <property type="chains" value="I=1-323"/>
</dbReference>
<dbReference type="PDB" id="8P6X">
    <property type="method" value="EM"/>
    <property type="resolution" value="1.90 A"/>
    <property type="chains" value="I=1-323"/>
</dbReference>
<dbReference type="PDB" id="8P6Y">
    <property type="method" value="EM"/>
    <property type="resolution" value="1.90 A"/>
    <property type="chains" value="I=1-323"/>
</dbReference>
<dbReference type="PDB" id="8P6Z">
    <property type="method" value="EM"/>
    <property type="resolution" value="2.10 A"/>
    <property type="chains" value="I=1-323"/>
</dbReference>
<dbReference type="PDB" id="8P70">
    <property type="method" value="EM"/>
    <property type="resolution" value="2.00 A"/>
    <property type="chains" value="I=1-323"/>
</dbReference>
<dbReference type="PDB" id="8P71">
    <property type="method" value="EM"/>
    <property type="resolution" value="2.00 A"/>
    <property type="chains" value="I=1-323"/>
</dbReference>
<dbReference type="PDB" id="8P72">
    <property type="method" value="EM"/>
    <property type="resolution" value="1.90 A"/>
    <property type="chains" value="I=1-323"/>
</dbReference>
<dbReference type="PDB" id="8P73">
    <property type="method" value="EM"/>
    <property type="resolution" value="2.00 A"/>
    <property type="chains" value="I=1-323"/>
</dbReference>
<dbReference type="PDB" id="8P74">
    <property type="method" value="EM"/>
    <property type="resolution" value="2.20 A"/>
    <property type="chains" value="I=1-323"/>
</dbReference>
<dbReference type="PDB" id="8P75">
    <property type="method" value="EM"/>
    <property type="resolution" value="2.00 A"/>
    <property type="chains" value="I=1-323"/>
</dbReference>
<dbReference type="PDB" id="8P76">
    <property type="method" value="EM"/>
    <property type="resolution" value="2.00 A"/>
    <property type="chains" value="I=1-323"/>
</dbReference>
<dbReference type="PDB" id="8P77">
    <property type="method" value="EM"/>
    <property type="resolution" value="1.80 A"/>
    <property type="chains" value="I=1-323"/>
</dbReference>
<dbReference type="PDB" id="8P78">
    <property type="method" value="EM"/>
    <property type="resolution" value="1.90 A"/>
    <property type="chains" value="I=1-323"/>
</dbReference>
<dbReference type="PDB" id="8P79">
    <property type="method" value="EM"/>
    <property type="resolution" value="1.70 A"/>
    <property type="chains" value="I=1-323"/>
</dbReference>
<dbReference type="PDB" id="8PLZ">
    <property type="method" value="EM"/>
    <property type="resolution" value="1.90 A"/>
    <property type="chains" value="I=1-323"/>
</dbReference>
<dbReference type="PDB" id="8PYR">
    <property type="method" value="X-ray"/>
    <property type="resolution" value="2.15 A"/>
    <property type="chains" value="B/F=1-323"/>
</dbReference>
<dbReference type="PDB" id="8S0R">
    <property type="method" value="EM"/>
    <property type="resolution" value="2.40 A"/>
    <property type="chains" value="I=1-323"/>
</dbReference>
<dbReference type="PDB" id="8S0T">
    <property type="method" value="EM"/>
    <property type="resolution" value="2.30 A"/>
    <property type="chains" value="I=1-323"/>
</dbReference>
<dbReference type="PDBsum" id="1JKW"/>
<dbReference type="PDBsum" id="1KXU"/>
<dbReference type="PDBsum" id="6O9L"/>
<dbReference type="PDBsum" id="6XBZ"/>
<dbReference type="PDBsum" id="6XD3"/>
<dbReference type="PDBsum" id="7B5O"/>
<dbReference type="PDBsum" id="7B5Q"/>
<dbReference type="PDBsum" id="7EGB"/>
<dbReference type="PDBsum" id="7EGC"/>
<dbReference type="PDBsum" id="7ENA"/>
<dbReference type="PDBsum" id="7ENC"/>
<dbReference type="PDBsum" id="7LBM"/>
<dbReference type="PDBsum" id="7NVR"/>
<dbReference type="PDBsum" id="8BVW"/>
<dbReference type="PDBsum" id="8BYQ"/>
<dbReference type="PDBsum" id="8GXQ"/>
<dbReference type="PDBsum" id="8GXS"/>
<dbReference type="PDBsum" id="8ORM"/>
<dbReference type="PDBsum" id="8P6V"/>
<dbReference type="PDBsum" id="8P6W"/>
<dbReference type="PDBsum" id="8P6X"/>
<dbReference type="PDBsum" id="8P6Y"/>
<dbReference type="PDBsum" id="8P6Z"/>
<dbReference type="PDBsum" id="8P70"/>
<dbReference type="PDBsum" id="8P71"/>
<dbReference type="PDBsum" id="8P72"/>
<dbReference type="PDBsum" id="8P73"/>
<dbReference type="PDBsum" id="8P74"/>
<dbReference type="PDBsum" id="8P75"/>
<dbReference type="PDBsum" id="8P76"/>
<dbReference type="PDBsum" id="8P77"/>
<dbReference type="PDBsum" id="8P78"/>
<dbReference type="PDBsum" id="8P79"/>
<dbReference type="PDBsum" id="8PLZ"/>
<dbReference type="PDBsum" id="8PYR"/>
<dbReference type="PDBsum" id="8S0R"/>
<dbReference type="PDBsum" id="8S0T"/>
<dbReference type="EMDB" id="EMD-12042"/>
<dbReference type="EMDB" id="EMD-12610"/>
<dbReference type="EMDB" id="EMD-16274"/>
<dbReference type="EMDB" id="EMD-16331"/>
<dbReference type="EMDB" id="EMD-17129"/>
<dbReference type="EMDB" id="EMD-17470"/>
<dbReference type="EMDB" id="EMD-17471"/>
<dbReference type="EMDB" id="EMD-17472"/>
<dbReference type="EMDB" id="EMD-17473"/>
<dbReference type="EMDB" id="EMD-17474"/>
<dbReference type="EMDB" id="EMD-17475"/>
<dbReference type="EMDB" id="EMD-17476"/>
<dbReference type="EMDB" id="EMD-17477"/>
<dbReference type="EMDB" id="EMD-17478"/>
<dbReference type="EMDB" id="EMD-17479"/>
<dbReference type="EMDB" id="EMD-17480"/>
<dbReference type="EMDB" id="EMD-17481"/>
<dbReference type="EMDB" id="EMD-17482"/>
<dbReference type="EMDB" id="EMD-17483"/>
<dbReference type="EMDB" id="EMD-17484"/>
<dbReference type="EMDB" id="EMD-17485"/>
<dbReference type="EMDB" id="EMD-17486"/>
<dbReference type="EMDB" id="EMD-17487"/>
<dbReference type="EMDB" id="EMD-17488"/>
<dbReference type="EMDB" id="EMD-17489"/>
<dbReference type="EMDB" id="EMD-17490"/>
<dbReference type="EMDB" id="EMD-17491"/>
<dbReference type="EMDB" id="EMD-17492"/>
<dbReference type="EMDB" id="EMD-17493"/>
<dbReference type="EMDB" id="EMD-17494"/>
<dbReference type="EMDB" id="EMD-17495"/>
<dbReference type="EMDB" id="EMD-17496"/>
<dbReference type="EMDB" id="EMD-17497"/>
<dbReference type="EMDB" id="EMD-17498"/>
<dbReference type="EMDB" id="EMD-17499"/>
<dbReference type="EMDB" id="EMD-17500"/>
<dbReference type="EMDB" id="EMD-17501"/>
<dbReference type="EMDB" id="EMD-17502"/>
<dbReference type="EMDB" id="EMD-17503"/>
<dbReference type="EMDB" id="EMD-17504"/>
<dbReference type="EMDB" id="EMD-17505"/>
<dbReference type="EMDB" id="EMD-17506"/>
<dbReference type="EMDB" id="EMD-17507"/>
<dbReference type="EMDB" id="EMD-17508"/>
<dbReference type="EMDB" id="EMD-17509"/>
<dbReference type="EMDB" id="EMD-17510"/>
<dbReference type="EMDB" id="EMD-17511"/>
<dbReference type="EMDB" id="EMD-17512"/>
<dbReference type="EMDB" id="EMD-17513"/>
<dbReference type="EMDB" id="EMD-17514"/>
<dbReference type="EMDB" id="EMD-17515"/>
<dbReference type="EMDB" id="EMD-17516"/>
<dbReference type="EMDB" id="EMD-17517"/>
<dbReference type="EMDB" id="EMD-17518"/>
<dbReference type="EMDB" id="EMD-17519"/>
<dbReference type="EMDB" id="EMD-17520"/>
<dbReference type="EMDB" id="EMD-17521"/>
<dbReference type="EMDB" id="EMD-17522"/>
<dbReference type="EMDB" id="EMD-17523"/>
<dbReference type="EMDB" id="EMD-17524"/>
<dbReference type="EMDB" id="EMD-17525"/>
<dbReference type="EMDB" id="EMD-17526"/>
<dbReference type="EMDB" id="EMD-17527"/>
<dbReference type="EMDB" id="EMD-17754"/>
<dbReference type="EMDB" id="EMD-19627"/>
<dbReference type="EMDB" id="EMD-19628"/>
<dbReference type="EMDB" id="EMD-22123"/>
<dbReference type="EMDB" id="EMD-22131"/>
<dbReference type="EMDB" id="EMD-23255"/>
<dbReference type="EMDB" id="EMD-31111"/>
<dbReference type="EMDB" id="EMD-31112"/>
<dbReference type="EMDB" id="EMD-31204"/>
<dbReference type="EMDB" id="EMD-31207"/>
<dbReference type="EMDB" id="EMD-34359"/>
<dbReference type="EMDB" id="EMD-34360"/>
<dbReference type="SMR" id="P51946"/>
<dbReference type="BioGRID" id="107342">
    <property type="interactions" value="99"/>
</dbReference>
<dbReference type="ComplexPortal" id="CPX-2395">
    <property type="entry name" value="General transcription factor TFIIH complex"/>
</dbReference>
<dbReference type="ComplexPortal" id="CPX-578">
    <property type="entry name" value="Cyclin-dependent protein kinase-activating kinase complex"/>
</dbReference>
<dbReference type="CORUM" id="P51946"/>
<dbReference type="DIP" id="DIP-5996N"/>
<dbReference type="FunCoup" id="P51946">
    <property type="interactions" value="2551"/>
</dbReference>
<dbReference type="IntAct" id="P51946">
    <property type="interactions" value="106"/>
</dbReference>
<dbReference type="MINT" id="P51946"/>
<dbReference type="STRING" id="9606.ENSP00000498750"/>
<dbReference type="BindingDB" id="P51946"/>
<dbReference type="ChEMBL" id="CHEMBL2165"/>
<dbReference type="GlyGen" id="P51946">
    <property type="glycosylation" value="2 sites, 1 N-linked glycan (1 site), 1 O-linked glycan (1 site)"/>
</dbReference>
<dbReference type="iPTMnet" id="P51946"/>
<dbReference type="PhosphoSitePlus" id="P51946"/>
<dbReference type="BioMuta" id="CCNH"/>
<dbReference type="DMDM" id="1706232"/>
<dbReference type="jPOST" id="P51946"/>
<dbReference type="MassIVE" id="P51946"/>
<dbReference type="PaxDb" id="9606-ENSP00000256897"/>
<dbReference type="PeptideAtlas" id="P51946"/>
<dbReference type="ProteomicsDB" id="56451"/>
<dbReference type="Pumba" id="P51946"/>
<dbReference type="Antibodypedia" id="12934">
    <property type="antibodies" value="536 antibodies from 38 providers"/>
</dbReference>
<dbReference type="DNASU" id="902"/>
<dbReference type="Ensembl" id="ENST00000256897.9">
    <property type="protein sequence ID" value="ENSP00000256897.4"/>
    <property type="gene ID" value="ENSG00000134480.17"/>
</dbReference>
<dbReference type="Ensembl" id="ENST00000713562.1">
    <property type="protein sequence ID" value="ENSP00000518855.1"/>
    <property type="gene ID" value="ENSG00000134480.17"/>
</dbReference>
<dbReference type="GeneID" id="902"/>
<dbReference type="KEGG" id="hsa:902"/>
<dbReference type="MANE-Select" id="ENST00000256897.9">
    <property type="protein sequence ID" value="ENSP00000256897.4"/>
    <property type="RefSeq nucleotide sequence ID" value="NM_001239.4"/>
    <property type="RefSeq protein sequence ID" value="NP_001230.1"/>
</dbReference>
<dbReference type="UCSC" id="uc003kjb.4">
    <property type="organism name" value="human"/>
</dbReference>
<dbReference type="AGR" id="HGNC:1594"/>
<dbReference type="CTD" id="902"/>
<dbReference type="DisGeNET" id="902"/>
<dbReference type="GeneCards" id="CCNH"/>
<dbReference type="HGNC" id="HGNC:1594">
    <property type="gene designation" value="CCNH"/>
</dbReference>
<dbReference type="HPA" id="ENSG00000134480">
    <property type="expression patterns" value="Low tissue specificity"/>
</dbReference>
<dbReference type="MalaCards" id="CCNH"/>
<dbReference type="MIM" id="601953">
    <property type="type" value="gene"/>
</dbReference>
<dbReference type="neXtProt" id="NX_P51946"/>
<dbReference type="OpenTargets" id="ENSG00000134480"/>
<dbReference type="PharmGKB" id="PA26159"/>
<dbReference type="VEuPathDB" id="HostDB:ENSG00000134480"/>
<dbReference type="eggNOG" id="KOG2496">
    <property type="taxonomic scope" value="Eukaryota"/>
</dbReference>
<dbReference type="GeneTree" id="ENSGT00390000008634"/>
<dbReference type="InParanoid" id="P51946"/>
<dbReference type="OrthoDB" id="340962at2759"/>
<dbReference type="PAN-GO" id="P51946">
    <property type="GO annotations" value="5 GO annotations based on evolutionary models"/>
</dbReference>
<dbReference type="PhylomeDB" id="P51946"/>
<dbReference type="TreeFam" id="TF101008"/>
<dbReference type="PathwayCommons" id="P51946"/>
<dbReference type="Reactome" id="R-HSA-112382">
    <property type="pathway name" value="Formation of RNA Pol II elongation complex"/>
</dbReference>
<dbReference type="Reactome" id="R-HSA-113418">
    <property type="pathway name" value="Formation of the Early Elongation Complex"/>
</dbReference>
<dbReference type="Reactome" id="R-HSA-167152">
    <property type="pathway name" value="Formation of HIV elongation complex in the absence of HIV Tat"/>
</dbReference>
<dbReference type="Reactome" id="R-HSA-167158">
    <property type="pathway name" value="Formation of the HIV-1 Early Elongation Complex"/>
</dbReference>
<dbReference type="Reactome" id="R-HSA-167160">
    <property type="pathway name" value="RNA Pol II CTD phosphorylation and interaction with CE during HIV infection"/>
</dbReference>
<dbReference type="Reactome" id="R-HSA-167161">
    <property type="pathway name" value="HIV Transcription Initiation"/>
</dbReference>
<dbReference type="Reactome" id="R-HSA-167162">
    <property type="pathway name" value="RNA Polymerase II HIV Promoter Escape"/>
</dbReference>
<dbReference type="Reactome" id="R-HSA-167172">
    <property type="pathway name" value="Transcription of the HIV genome"/>
</dbReference>
<dbReference type="Reactome" id="R-HSA-167200">
    <property type="pathway name" value="Formation of HIV-1 elongation complex containing HIV-1 Tat"/>
</dbReference>
<dbReference type="Reactome" id="R-HSA-167246">
    <property type="pathway name" value="Tat-mediated elongation of the HIV-1 transcript"/>
</dbReference>
<dbReference type="Reactome" id="R-HSA-427413">
    <property type="pathway name" value="NoRC negatively regulates rRNA expression"/>
</dbReference>
<dbReference type="Reactome" id="R-HSA-5696395">
    <property type="pathway name" value="Formation of Incision Complex in GG-NER"/>
</dbReference>
<dbReference type="Reactome" id="R-HSA-674695">
    <property type="pathway name" value="RNA Polymerase II Pre-transcription Events"/>
</dbReference>
<dbReference type="Reactome" id="R-HSA-6781823">
    <property type="pathway name" value="Formation of TC-NER Pre-Incision Complex"/>
</dbReference>
<dbReference type="Reactome" id="R-HSA-6781827">
    <property type="pathway name" value="Transcription-Coupled Nucleotide Excision Repair (TC-NER)"/>
</dbReference>
<dbReference type="Reactome" id="R-HSA-6782135">
    <property type="pathway name" value="Dual incision in TC-NER"/>
</dbReference>
<dbReference type="Reactome" id="R-HSA-6782210">
    <property type="pathway name" value="Gap-filling DNA repair synthesis and ligation in TC-NER"/>
</dbReference>
<dbReference type="Reactome" id="R-HSA-6796648">
    <property type="pathway name" value="TP53 Regulates Transcription of DNA Repair Genes"/>
</dbReference>
<dbReference type="Reactome" id="R-HSA-69202">
    <property type="pathway name" value="Cyclin E associated events during G1/S transition"/>
</dbReference>
<dbReference type="Reactome" id="R-HSA-69231">
    <property type="pathway name" value="Cyclin D associated events in G1"/>
</dbReference>
<dbReference type="Reactome" id="R-HSA-69273">
    <property type="pathway name" value="Cyclin A/B1/B2 associated events during G2/M transition"/>
</dbReference>
<dbReference type="Reactome" id="R-HSA-69656">
    <property type="pathway name" value="Cyclin A:Cdk2-associated events at S phase entry"/>
</dbReference>
<dbReference type="Reactome" id="R-HSA-72086">
    <property type="pathway name" value="mRNA Capping"/>
</dbReference>
<dbReference type="Reactome" id="R-HSA-73762">
    <property type="pathway name" value="RNA Polymerase I Transcription Initiation"/>
</dbReference>
<dbReference type="Reactome" id="R-HSA-73772">
    <property type="pathway name" value="RNA Polymerase I Promoter Escape"/>
</dbReference>
<dbReference type="Reactome" id="R-HSA-73776">
    <property type="pathway name" value="RNA Polymerase II Promoter Escape"/>
</dbReference>
<dbReference type="Reactome" id="R-HSA-73779">
    <property type="pathway name" value="RNA Polymerase II Transcription Pre-Initiation And Promoter Opening"/>
</dbReference>
<dbReference type="Reactome" id="R-HSA-73863">
    <property type="pathway name" value="RNA Polymerase I Transcription Termination"/>
</dbReference>
<dbReference type="Reactome" id="R-HSA-75953">
    <property type="pathway name" value="RNA Polymerase II Transcription Initiation"/>
</dbReference>
<dbReference type="Reactome" id="R-HSA-75955">
    <property type="pathway name" value="RNA Polymerase II Transcription Elongation"/>
</dbReference>
<dbReference type="Reactome" id="R-HSA-76042">
    <property type="pathway name" value="RNA Polymerase II Transcription Initiation And Promoter Clearance"/>
</dbReference>
<dbReference type="Reactome" id="R-HSA-77075">
    <property type="pathway name" value="RNA Pol II CTD phosphorylation and interaction with CE"/>
</dbReference>
<dbReference type="Reactome" id="R-HSA-8939236">
    <property type="pathway name" value="RUNX1 regulates transcription of genes involved in differentiation of HSCs"/>
</dbReference>
<dbReference type="SignaLink" id="P51946"/>
<dbReference type="SIGNOR" id="P51946"/>
<dbReference type="BioGRID-ORCS" id="902">
    <property type="hits" value="777 hits in 1173 CRISPR screens"/>
</dbReference>
<dbReference type="ChiTaRS" id="CCNH">
    <property type="organism name" value="human"/>
</dbReference>
<dbReference type="EvolutionaryTrace" id="P51946"/>
<dbReference type="GeneWiki" id="Cyclin_H"/>
<dbReference type="GenomeRNAi" id="902"/>
<dbReference type="Pharos" id="P51946">
    <property type="development level" value="Tbio"/>
</dbReference>
<dbReference type="PRO" id="PR:P51946"/>
<dbReference type="Proteomes" id="UP000005640">
    <property type="component" value="Chromosome 5"/>
</dbReference>
<dbReference type="RNAct" id="P51946">
    <property type="molecule type" value="protein"/>
</dbReference>
<dbReference type="Bgee" id="ENSG00000134480">
    <property type="expression patterns" value="Expressed in calcaneal tendon and 201 other cell types or tissues"/>
</dbReference>
<dbReference type="ExpressionAtlas" id="P51946">
    <property type="expression patterns" value="baseline and differential"/>
</dbReference>
<dbReference type="GO" id="GO:0070516">
    <property type="term" value="C:CAK-ERCC2 complex"/>
    <property type="evidence" value="ECO:0000314"/>
    <property type="project" value="UniProtKB"/>
</dbReference>
<dbReference type="GO" id="GO:0000307">
    <property type="term" value="C:cyclin-dependent protein kinase holoenzyme complex"/>
    <property type="evidence" value="ECO:0000314"/>
    <property type="project" value="ComplexPortal"/>
</dbReference>
<dbReference type="GO" id="GO:0001673">
    <property type="term" value="C:male germ cell nucleus"/>
    <property type="evidence" value="ECO:0007669"/>
    <property type="project" value="Ensembl"/>
</dbReference>
<dbReference type="GO" id="GO:0005654">
    <property type="term" value="C:nucleoplasm"/>
    <property type="evidence" value="ECO:0000314"/>
    <property type="project" value="HPA"/>
</dbReference>
<dbReference type="GO" id="GO:0005634">
    <property type="term" value="C:nucleus"/>
    <property type="evidence" value="ECO:0000318"/>
    <property type="project" value="GO_Central"/>
</dbReference>
<dbReference type="GO" id="GO:0000439">
    <property type="term" value="C:transcription factor TFIIH core complex"/>
    <property type="evidence" value="ECO:0000314"/>
    <property type="project" value="UniProtKB"/>
</dbReference>
<dbReference type="GO" id="GO:0005675">
    <property type="term" value="C:transcription factor TFIIH holo complex"/>
    <property type="evidence" value="ECO:0000314"/>
    <property type="project" value="UniProtKB"/>
</dbReference>
<dbReference type="GO" id="GO:0070985">
    <property type="term" value="C:transcription factor TFIIK complex"/>
    <property type="evidence" value="ECO:0000314"/>
    <property type="project" value="UniProtKB"/>
</dbReference>
<dbReference type="GO" id="GO:0016538">
    <property type="term" value="F:cyclin-dependent protein serine/threonine kinase regulator activity"/>
    <property type="evidence" value="ECO:0000318"/>
    <property type="project" value="GO_Central"/>
</dbReference>
<dbReference type="GO" id="GO:0016301">
    <property type="term" value="F:kinase activity"/>
    <property type="evidence" value="ECO:0007669"/>
    <property type="project" value="Ensembl"/>
</dbReference>
<dbReference type="GO" id="GO:0050821">
    <property type="term" value="P:protein stabilization"/>
    <property type="evidence" value="ECO:0000315"/>
    <property type="project" value="CAFA"/>
</dbReference>
<dbReference type="GO" id="GO:2000045">
    <property type="term" value="P:regulation of G1/S transition of mitotic cell cycle"/>
    <property type="evidence" value="ECO:0000314"/>
    <property type="project" value="ComplexPortal"/>
</dbReference>
<dbReference type="GO" id="GO:0006357">
    <property type="term" value="P:regulation of transcription by RNA polymerase II"/>
    <property type="evidence" value="ECO:0000314"/>
    <property type="project" value="UniProtKB"/>
</dbReference>
<dbReference type="GO" id="GO:0006367">
    <property type="term" value="P:transcription initiation at RNA polymerase II promoter"/>
    <property type="evidence" value="ECO:0000314"/>
    <property type="project" value="UniProtKB"/>
</dbReference>
<dbReference type="CDD" id="cd20524">
    <property type="entry name" value="CYCLIN_CCNH_rpt1"/>
    <property type="match status" value="1"/>
</dbReference>
<dbReference type="CDD" id="cd20525">
    <property type="entry name" value="CYCLIN_CCNH_rpt2"/>
    <property type="match status" value="1"/>
</dbReference>
<dbReference type="DisProt" id="DP00307"/>
<dbReference type="FunFam" id="1.10.472.10:FF:000029">
    <property type="entry name" value="Cyclin h"/>
    <property type="match status" value="1"/>
</dbReference>
<dbReference type="FunFam" id="1.10.472.10:FF:000044">
    <property type="entry name" value="cyclin-H isoform X1"/>
    <property type="match status" value="1"/>
</dbReference>
<dbReference type="Gene3D" id="1.10.472.10">
    <property type="entry name" value="Cyclin-like"/>
    <property type="match status" value="2"/>
</dbReference>
<dbReference type="InterPro" id="IPR013763">
    <property type="entry name" value="Cyclin-like_dom"/>
</dbReference>
<dbReference type="InterPro" id="IPR036915">
    <property type="entry name" value="Cyclin-like_sf"/>
</dbReference>
<dbReference type="InterPro" id="IPR043198">
    <property type="entry name" value="Cyclin/Ssn8"/>
</dbReference>
<dbReference type="InterPro" id="IPR031658">
    <property type="entry name" value="Cyclin_C_2"/>
</dbReference>
<dbReference type="InterPro" id="IPR006671">
    <property type="entry name" value="Cyclin_N"/>
</dbReference>
<dbReference type="InterPro" id="IPR027081">
    <property type="entry name" value="CyclinH/Ccl1"/>
</dbReference>
<dbReference type="NCBIfam" id="TIGR00569">
    <property type="entry name" value="ccl1"/>
    <property type="match status" value="1"/>
</dbReference>
<dbReference type="PANTHER" id="PTHR10026">
    <property type="entry name" value="CYCLIN"/>
    <property type="match status" value="1"/>
</dbReference>
<dbReference type="Pfam" id="PF16899">
    <property type="entry name" value="Cyclin_C_2"/>
    <property type="match status" value="1"/>
</dbReference>
<dbReference type="Pfam" id="PF00134">
    <property type="entry name" value="Cyclin_N"/>
    <property type="match status" value="1"/>
</dbReference>
<dbReference type="SMART" id="SM00385">
    <property type="entry name" value="CYCLIN"/>
    <property type="match status" value="1"/>
</dbReference>
<dbReference type="SUPFAM" id="SSF47954">
    <property type="entry name" value="Cyclin-like"/>
    <property type="match status" value="2"/>
</dbReference>
<protein>
    <recommendedName>
        <fullName>Cyclin-H</fullName>
    </recommendedName>
    <alternativeName>
        <fullName>MO15-associated protein</fullName>
    </alternativeName>
    <alternativeName>
        <fullName>p34</fullName>
    </alternativeName>
    <alternativeName>
        <fullName>p37</fullName>
    </alternativeName>
</protein>
<sequence>MYHNSSQKRHWTFSSEEQLARLRADANRKFRCKAVANGKVLPNDPVFLEPHEEMTLCKYYEKRLLEFCSVFKPAMPRSVVGTACMYFKRFYLNNSVMEYHPRIIMLTCAFLACKVDEFNVSSPQFVGNLRESPLGQEKALEQILEYELLLIQQLNFHLIVHNPYRPFEGFLIDLKTRYPILENPEILRKTADDFLNRIALTDAYLLYTPSQIALTAILSSASRAGITMESYLSESLMLKENRTCLSQLLDIMKSMRNLVKKYEPPRSEEVAVLKQKLERCHSAELALNVITKKRKGYEDDDYVSKKSKHEEEEWTDDDLVESL</sequence>
<gene>
    <name type="primary">CCNH</name>
</gene>
<proteinExistence type="evidence at protein level"/>
<name>CCNH_HUMAN</name>